<accession>Q9CAS1</accession>
<comment type="function">
    <text>Probable thiol-disulfide oxidoreductase that may be involved in the redox regulation of a number of cytosolic enzymes.</text>
</comment>
<comment type="subcellular location">
    <subcellularLocation>
        <location evidence="1">Cytoplasm</location>
    </subcellularLocation>
</comment>
<comment type="similarity">
    <text evidence="3">Belongs to the thioredoxin family. Plant H-type subfamily.</text>
</comment>
<name>TRXH8_ARATH</name>
<dbReference type="EMBL" id="AC010675">
    <property type="protein sequence ID" value="AAG52561.1"/>
    <property type="molecule type" value="Genomic_DNA"/>
</dbReference>
<dbReference type="EMBL" id="CP002684">
    <property type="protein sequence ID" value="AEE34994.1"/>
    <property type="molecule type" value="Genomic_DNA"/>
</dbReference>
<dbReference type="EMBL" id="AK117825">
    <property type="protein sequence ID" value="BAC42467.1"/>
    <property type="molecule type" value="mRNA"/>
</dbReference>
<dbReference type="EMBL" id="BT003670">
    <property type="protein sequence ID" value="AAO39898.1"/>
    <property type="molecule type" value="mRNA"/>
</dbReference>
<dbReference type="PIR" id="B96721">
    <property type="entry name" value="B96721"/>
</dbReference>
<dbReference type="RefSeq" id="NP_177146.1">
    <property type="nucleotide sequence ID" value="NM_105656.3"/>
</dbReference>
<dbReference type="SMR" id="Q9CAS1"/>
<dbReference type="BioGRID" id="28545">
    <property type="interactions" value="6"/>
</dbReference>
<dbReference type="FunCoup" id="Q9CAS1">
    <property type="interactions" value="56"/>
</dbReference>
<dbReference type="IntAct" id="Q9CAS1">
    <property type="interactions" value="9"/>
</dbReference>
<dbReference type="STRING" id="3702.Q9CAS1"/>
<dbReference type="PaxDb" id="3702-AT1G69880.1"/>
<dbReference type="ProteomicsDB" id="232348"/>
<dbReference type="EnsemblPlants" id="AT1G69880.1">
    <property type="protein sequence ID" value="AT1G69880.1"/>
    <property type="gene ID" value="AT1G69880"/>
</dbReference>
<dbReference type="GeneID" id="843324"/>
<dbReference type="Gramene" id="AT1G69880.1">
    <property type="protein sequence ID" value="AT1G69880.1"/>
    <property type="gene ID" value="AT1G69880"/>
</dbReference>
<dbReference type="KEGG" id="ath:AT1G69880"/>
<dbReference type="Araport" id="AT1G69880"/>
<dbReference type="TAIR" id="AT1G69880">
    <property type="gene designation" value="TH8"/>
</dbReference>
<dbReference type="eggNOG" id="KOG0907">
    <property type="taxonomic scope" value="Eukaryota"/>
</dbReference>
<dbReference type="HOGENOM" id="CLU_090389_14_1_1"/>
<dbReference type="InParanoid" id="Q9CAS1"/>
<dbReference type="OMA" id="KLHKYTQ"/>
<dbReference type="PhylomeDB" id="Q9CAS1"/>
<dbReference type="PRO" id="PR:Q9CAS1"/>
<dbReference type="Proteomes" id="UP000006548">
    <property type="component" value="Chromosome 1"/>
</dbReference>
<dbReference type="ExpressionAtlas" id="Q9CAS1">
    <property type="expression patterns" value="baseline and differential"/>
</dbReference>
<dbReference type="GO" id="GO:0005737">
    <property type="term" value="C:cytoplasm"/>
    <property type="evidence" value="ECO:0007669"/>
    <property type="project" value="UniProtKB-SubCell"/>
</dbReference>
<dbReference type="CDD" id="cd02947">
    <property type="entry name" value="TRX_family"/>
    <property type="match status" value="1"/>
</dbReference>
<dbReference type="Gene3D" id="3.40.30.10">
    <property type="entry name" value="Glutaredoxin"/>
    <property type="match status" value="1"/>
</dbReference>
<dbReference type="InterPro" id="IPR036249">
    <property type="entry name" value="Thioredoxin-like_sf"/>
</dbReference>
<dbReference type="InterPro" id="IPR017937">
    <property type="entry name" value="Thioredoxin_CS"/>
</dbReference>
<dbReference type="InterPro" id="IPR013766">
    <property type="entry name" value="Thioredoxin_domain"/>
</dbReference>
<dbReference type="InterPro" id="IPR050620">
    <property type="entry name" value="Thioredoxin_H-type-like"/>
</dbReference>
<dbReference type="PANTHER" id="PTHR10438">
    <property type="entry name" value="THIOREDOXIN"/>
    <property type="match status" value="1"/>
</dbReference>
<dbReference type="PANTHER" id="PTHR10438:SF463">
    <property type="entry name" value="THIOREDOXIN"/>
    <property type="match status" value="1"/>
</dbReference>
<dbReference type="Pfam" id="PF00085">
    <property type="entry name" value="Thioredoxin"/>
    <property type="match status" value="1"/>
</dbReference>
<dbReference type="SUPFAM" id="SSF52833">
    <property type="entry name" value="Thioredoxin-like"/>
    <property type="match status" value="1"/>
</dbReference>
<dbReference type="PROSITE" id="PS00194">
    <property type="entry name" value="THIOREDOXIN_1"/>
    <property type="match status" value="1"/>
</dbReference>
<dbReference type="PROSITE" id="PS51352">
    <property type="entry name" value="THIOREDOXIN_2"/>
    <property type="match status" value="1"/>
</dbReference>
<reference key="1">
    <citation type="journal article" date="2000" name="Nature">
        <title>Sequence and analysis of chromosome 1 of the plant Arabidopsis thaliana.</title>
        <authorList>
            <person name="Theologis A."/>
            <person name="Ecker J.R."/>
            <person name="Palm C.J."/>
            <person name="Federspiel N.A."/>
            <person name="Kaul S."/>
            <person name="White O."/>
            <person name="Alonso J."/>
            <person name="Altafi H."/>
            <person name="Araujo R."/>
            <person name="Bowman C.L."/>
            <person name="Brooks S.Y."/>
            <person name="Buehler E."/>
            <person name="Chan A."/>
            <person name="Chao Q."/>
            <person name="Chen H."/>
            <person name="Cheuk R.F."/>
            <person name="Chin C.W."/>
            <person name="Chung M.K."/>
            <person name="Conn L."/>
            <person name="Conway A.B."/>
            <person name="Conway A.R."/>
            <person name="Creasy T.H."/>
            <person name="Dewar K."/>
            <person name="Dunn P."/>
            <person name="Etgu P."/>
            <person name="Feldblyum T.V."/>
            <person name="Feng J.-D."/>
            <person name="Fong B."/>
            <person name="Fujii C.Y."/>
            <person name="Gill J.E."/>
            <person name="Goldsmith A.D."/>
            <person name="Haas B."/>
            <person name="Hansen N.F."/>
            <person name="Hughes B."/>
            <person name="Huizar L."/>
            <person name="Hunter J.L."/>
            <person name="Jenkins J."/>
            <person name="Johnson-Hopson C."/>
            <person name="Khan S."/>
            <person name="Khaykin E."/>
            <person name="Kim C.J."/>
            <person name="Koo H.L."/>
            <person name="Kremenetskaia I."/>
            <person name="Kurtz D.B."/>
            <person name="Kwan A."/>
            <person name="Lam B."/>
            <person name="Langin-Hooper S."/>
            <person name="Lee A."/>
            <person name="Lee J.M."/>
            <person name="Lenz C.A."/>
            <person name="Li J.H."/>
            <person name="Li Y.-P."/>
            <person name="Lin X."/>
            <person name="Liu S.X."/>
            <person name="Liu Z.A."/>
            <person name="Luros J.S."/>
            <person name="Maiti R."/>
            <person name="Marziali A."/>
            <person name="Militscher J."/>
            <person name="Miranda M."/>
            <person name="Nguyen M."/>
            <person name="Nierman W.C."/>
            <person name="Osborne B.I."/>
            <person name="Pai G."/>
            <person name="Peterson J."/>
            <person name="Pham P.K."/>
            <person name="Rizzo M."/>
            <person name="Rooney T."/>
            <person name="Rowley D."/>
            <person name="Sakano H."/>
            <person name="Salzberg S.L."/>
            <person name="Schwartz J.R."/>
            <person name="Shinn P."/>
            <person name="Southwick A.M."/>
            <person name="Sun H."/>
            <person name="Tallon L.J."/>
            <person name="Tambunga G."/>
            <person name="Toriumi M.J."/>
            <person name="Town C.D."/>
            <person name="Utterback T."/>
            <person name="Van Aken S."/>
            <person name="Vaysberg M."/>
            <person name="Vysotskaia V.S."/>
            <person name="Walker M."/>
            <person name="Wu D."/>
            <person name="Yu G."/>
            <person name="Fraser C.M."/>
            <person name="Venter J.C."/>
            <person name="Davis R.W."/>
        </authorList>
    </citation>
    <scope>NUCLEOTIDE SEQUENCE [LARGE SCALE GENOMIC DNA]</scope>
    <source>
        <strain>cv. Columbia</strain>
    </source>
</reference>
<reference key="2">
    <citation type="journal article" date="2017" name="Plant J.">
        <title>Araport11: a complete reannotation of the Arabidopsis thaliana reference genome.</title>
        <authorList>
            <person name="Cheng C.Y."/>
            <person name="Krishnakumar V."/>
            <person name="Chan A.P."/>
            <person name="Thibaud-Nissen F."/>
            <person name="Schobel S."/>
            <person name="Town C.D."/>
        </authorList>
    </citation>
    <scope>GENOME REANNOTATION</scope>
    <source>
        <strain>cv. Columbia</strain>
    </source>
</reference>
<reference key="3">
    <citation type="journal article" date="2002" name="Science">
        <title>Functional annotation of a full-length Arabidopsis cDNA collection.</title>
        <authorList>
            <person name="Seki M."/>
            <person name="Narusaka M."/>
            <person name="Kamiya A."/>
            <person name="Ishida J."/>
            <person name="Satou M."/>
            <person name="Sakurai T."/>
            <person name="Nakajima M."/>
            <person name="Enju A."/>
            <person name="Akiyama K."/>
            <person name="Oono Y."/>
            <person name="Muramatsu M."/>
            <person name="Hayashizaki Y."/>
            <person name="Kawai J."/>
            <person name="Carninci P."/>
            <person name="Itoh M."/>
            <person name="Ishii Y."/>
            <person name="Arakawa T."/>
            <person name="Shibata K."/>
            <person name="Shinagawa A."/>
            <person name="Shinozaki K."/>
        </authorList>
    </citation>
    <scope>NUCLEOTIDE SEQUENCE [LARGE SCALE MRNA]</scope>
    <source>
        <strain>cv. Columbia</strain>
    </source>
</reference>
<reference key="4">
    <citation type="journal article" date="2003" name="Science">
        <title>Empirical analysis of transcriptional activity in the Arabidopsis genome.</title>
        <authorList>
            <person name="Yamada K."/>
            <person name="Lim J."/>
            <person name="Dale J.M."/>
            <person name="Chen H."/>
            <person name="Shinn P."/>
            <person name="Palm C.J."/>
            <person name="Southwick A.M."/>
            <person name="Wu H.C."/>
            <person name="Kim C.J."/>
            <person name="Nguyen M."/>
            <person name="Pham P.K."/>
            <person name="Cheuk R.F."/>
            <person name="Karlin-Newmann G."/>
            <person name="Liu S.X."/>
            <person name="Lam B."/>
            <person name="Sakano H."/>
            <person name="Wu T."/>
            <person name="Yu G."/>
            <person name="Miranda M."/>
            <person name="Quach H.L."/>
            <person name="Tripp M."/>
            <person name="Chang C.H."/>
            <person name="Lee J.M."/>
            <person name="Toriumi M.J."/>
            <person name="Chan M.M."/>
            <person name="Tang C.C."/>
            <person name="Onodera C.S."/>
            <person name="Deng J.M."/>
            <person name="Akiyama K."/>
            <person name="Ansari Y."/>
            <person name="Arakawa T."/>
            <person name="Banh J."/>
            <person name="Banno F."/>
            <person name="Bowser L."/>
            <person name="Brooks S.Y."/>
            <person name="Carninci P."/>
            <person name="Chao Q."/>
            <person name="Choy N."/>
            <person name="Enju A."/>
            <person name="Goldsmith A.D."/>
            <person name="Gurjal M."/>
            <person name="Hansen N.F."/>
            <person name="Hayashizaki Y."/>
            <person name="Johnson-Hopson C."/>
            <person name="Hsuan V.W."/>
            <person name="Iida K."/>
            <person name="Karnes M."/>
            <person name="Khan S."/>
            <person name="Koesema E."/>
            <person name="Ishida J."/>
            <person name="Jiang P.X."/>
            <person name="Jones T."/>
            <person name="Kawai J."/>
            <person name="Kamiya A."/>
            <person name="Meyers C."/>
            <person name="Nakajima M."/>
            <person name="Narusaka M."/>
            <person name="Seki M."/>
            <person name="Sakurai T."/>
            <person name="Satou M."/>
            <person name="Tamse R."/>
            <person name="Vaysberg M."/>
            <person name="Wallender E.K."/>
            <person name="Wong C."/>
            <person name="Yamamura Y."/>
            <person name="Yuan S."/>
            <person name="Shinozaki K."/>
            <person name="Davis R.W."/>
            <person name="Theologis A."/>
            <person name="Ecker J.R."/>
        </authorList>
    </citation>
    <scope>NUCLEOTIDE SEQUENCE [LARGE SCALE MRNA]</scope>
    <source>
        <strain>cv. Columbia</strain>
    </source>
</reference>
<reference key="5">
    <citation type="journal article" date="2009" name="Mol. Plant">
        <title>Comparative genomic study of the thioredoxin family in photosynthetic organisms with emphasis on Populus trichocarpa.</title>
        <authorList>
            <person name="Chibani K."/>
            <person name="Wingsle G."/>
            <person name="Jacquot J.P."/>
            <person name="Gelhaye E."/>
            <person name="Rouhier N."/>
        </authorList>
    </citation>
    <scope>GENE FAMILY</scope>
    <scope>NOMENCLATURE</scope>
</reference>
<sequence>MGANVSTPDQRFQVTHFRSTKPWTPRPEIYPFKVNSPCIVEIKNMNQWKSRLNALKDTNKLLVIEFTAKWCGPCKTLEPKLEELAAKYTDVEFVKIDVDVLMSVWMEFNLSTLPAIVFMKRGREVDMVVGVKVDELERKLNKYTQSFF</sequence>
<organism>
    <name type="scientific">Arabidopsis thaliana</name>
    <name type="common">Mouse-ear cress</name>
    <dbReference type="NCBI Taxonomy" id="3702"/>
    <lineage>
        <taxon>Eukaryota</taxon>
        <taxon>Viridiplantae</taxon>
        <taxon>Streptophyta</taxon>
        <taxon>Embryophyta</taxon>
        <taxon>Tracheophyta</taxon>
        <taxon>Spermatophyta</taxon>
        <taxon>Magnoliopsida</taxon>
        <taxon>eudicotyledons</taxon>
        <taxon>Gunneridae</taxon>
        <taxon>Pentapetalae</taxon>
        <taxon>rosids</taxon>
        <taxon>malvids</taxon>
        <taxon>Brassicales</taxon>
        <taxon>Brassicaceae</taxon>
        <taxon>Camelineae</taxon>
        <taxon>Arabidopsis</taxon>
    </lineage>
</organism>
<protein>
    <recommendedName>
        <fullName>Thioredoxin H8</fullName>
        <shortName>AtTrxh8</shortName>
    </recommendedName>
</protein>
<proteinExistence type="evidence at transcript level"/>
<feature type="chain" id="PRO_0000394535" description="Thioredoxin H8">
    <location>
        <begin position="1"/>
        <end position="148"/>
    </location>
</feature>
<feature type="domain" description="Thioredoxin" evidence="2">
    <location>
        <begin position="1"/>
        <end position="145"/>
    </location>
</feature>
<feature type="active site" description="Nucleophile" evidence="1">
    <location>
        <position position="71"/>
    </location>
</feature>
<feature type="active site" description="Nucleophile" evidence="1">
    <location>
        <position position="74"/>
    </location>
</feature>
<feature type="site" description="Contributes to redox potential value" evidence="1">
    <location>
        <position position="72"/>
    </location>
</feature>
<feature type="site" description="Contributes to redox potential value" evidence="1">
    <location>
        <position position="73"/>
    </location>
</feature>
<feature type="disulfide bond" description="Redox-active" evidence="2">
    <location>
        <begin position="71"/>
        <end position="74"/>
    </location>
</feature>
<keyword id="KW-0963">Cytoplasm</keyword>
<keyword id="KW-1015">Disulfide bond</keyword>
<keyword id="KW-0249">Electron transport</keyword>
<keyword id="KW-0676">Redox-active center</keyword>
<keyword id="KW-1185">Reference proteome</keyword>
<keyword id="KW-0813">Transport</keyword>
<gene>
    <name type="primary">TRX8</name>
    <name type="ordered locus">At1g69880</name>
    <name type="ORF">T17F3.9</name>
</gene>
<evidence type="ECO:0000250" key="1"/>
<evidence type="ECO:0000255" key="2">
    <source>
        <dbReference type="PROSITE-ProRule" id="PRU00691"/>
    </source>
</evidence>
<evidence type="ECO:0000305" key="3"/>